<organism>
    <name type="scientific">Thermofilum pendens (strain DSM 2475 / Hrk 5)</name>
    <dbReference type="NCBI Taxonomy" id="368408"/>
    <lineage>
        <taxon>Archaea</taxon>
        <taxon>Thermoproteota</taxon>
        <taxon>Thermoprotei</taxon>
        <taxon>Thermofilales</taxon>
        <taxon>Thermofilaceae</taxon>
        <taxon>Thermofilum</taxon>
    </lineage>
</organism>
<gene>
    <name evidence="1" type="primary">rnp1</name>
    <name type="ordered locus">Tpen_0486</name>
</gene>
<dbReference type="EC" id="3.1.26.5" evidence="1"/>
<dbReference type="EMBL" id="CP000505">
    <property type="protein sequence ID" value="ABL77894.1"/>
    <property type="molecule type" value="Genomic_DNA"/>
</dbReference>
<dbReference type="RefSeq" id="WP_011752159.1">
    <property type="nucleotide sequence ID" value="NC_008698.1"/>
</dbReference>
<dbReference type="SMR" id="A1RXG4"/>
<dbReference type="STRING" id="368408.Tpen_0486"/>
<dbReference type="EnsemblBacteria" id="ABL77894">
    <property type="protein sequence ID" value="ABL77894"/>
    <property type="gene ID" value="Tpen_0486"/>
</dbReference>
<dbReference type="GeneID" id="4601784"/>
<dbReference type="KEGG" id="tpe:Tpen_0486"/>
<dbReference type="eggNOG" id="arCOG00784">
    <property type="taxonomic scope" value="Archaea"/>
</dbReference>
<dbReference type="HOGENOM" id="CLU_107020_2_1_2"/>
<dbReference type="OrthoDB" id="39019at2157"/>
<dbReference type="Proteomes" id="UP000000641">
    <property type="component" value="Chromosome"/>
</dbReference>
<dbReference type="GO" id="GO:0005737">
    <property type="term" value="C:cytoplasm"/>
    <property type="evidence" value="ECO:0007669"/>
    <property type="project" value="UniProtKB-SubCell"/>
</dbReference>
<dbReference type="GO" id="GO:0030677">
    <property type="term" value="C:ribonuclease P complex"/>
    <property type="evidence" value="ECO:0007669"/>
    <property type="project" value="UniProtKB-UniRule"/>
</dbReference>
<dbReference type="GO" id="GO:0004526">
    <property type="term" value="F:ribonuclease P activity"/>
    <property type="evidence" value="ECO:0007669"/>
    <property type="project" value="UniProtKB-UniRule"/>
</dbReference>
<dbReference type="GO" id="GO:0003723">
    <property type="term" value="F:RNA binding"/>
    <property type="evidence" value="ECO:0007669"/>
    <property type="project" value="InterPro"/>
</dbReference>
<dbReference type="GO" id="GO:0001682">
    <property type="term" value="P:tRNA 5'-leader removal"/>
    <property type="evidence" value="ECO:0007669"/>
    <property type="project" value="UniProtKB-UniRule"/>
</dbReference>
<dbReference type="Gene3D" id="2.30.30.210">
    <property type="entry name" value="Ribonuclease P/MRP, subunit p29"/>
    <property type="match status" value="1"/>
</dbReference>
<dbReference type="HAMAP" id="MF_00754">
    <property type="entry name" value="RNase_P_1"/>
    <property type="match status" value="1"/>
</dbReference>
<dbReference type="InterPro" id="IPR036980">
    <property type="entry name" value="RNase_P/MRP_Rpp29_sf"/>
</dbReference>
<dbReference type="InterPro" id="IPR023538">
    <property type="entry name" value="RNP1"/>
</dbReference>
<dbReference type="InterPro" id="IPR023534">
    <property type="entry name" value="Rof/RNase_P-like"/>
</dbReference>
<dbReference type="InterPro" id="IPR002730">
    <property type="entry name" value="Rpp29/RNP1"/>
</dbReference>
<dbReference type="Pfam" id="PF01868">
    <property type="entry name" value="RNase_P-MRP_p29"/>
    <property type="match status" value="1"/>
</dbReference>
<dbReference type="SMART" id="SM00538">
    <property type="entry name" value="POP4"/>
    <property type="match status" value="1"/>
</dbReference>
<dbReference type="SUPFAM" id="SSF101744">
    <property type="entry name" value="Rof/RNase P subunit-like"/>
    <property type="match status" value="1"/>
</dbReference>
<proteinExistence type="inferred from homology"/>
<sequence>MKITPKNILRHELIGLEACVVKSKNPSQVGICGLILDETYKTIVIGVPGGPKKRIFKAQVVLRIKLPDGKELLVDGAFLVGRPEERLKRRVMLW</sequence>
<name>RNP1_THEPD</name>
<comment type="function">
    <text evidence="1">Part of ribonuclease P, a protein complex that generates mature tRNA molecules by cleaving their 5'-ends.</text>
</comment>
<comment type="catalytic activity">
    <reaction evidence="1">
        <text>Endonucleolytic cleavage of RNA, removing 5'-extranucleotides from tRNA precursor.</text>
        <dbReference type="EC" id="3.1.26.5"/>
    </reaction>
</comment>
<comment type="subunit">
    <text evidence="1">Consists of a catalytic RNA component and at least 4-5 protein subunits.</text>
</comment>
<comment type="subcellular location">
    <subcellularLocation>
        <location evidence="1">Cytoplasm</location>
    </subcellularLocation>
</comment>
<comment type="similarity">
    <text evidence="1">Belongs to the eukaryotic/archaeal RNase P protein component 1 family.</text>
</comment>
<reference key="1">
    <citation type="journal article" date="2008" name="J. Bacteriol.">
        <title>Genome sequence of Thermofilum pendens reveals an exceptional loss of biosynthetic pathways without genome reduction.</title>
        <authorList>
            <person name="Anderson I."/>
            <person name="Rodriguez J."/>
            <person name="Susanti D."/>
            <person name="Porat I."/>
            <person name="Reich C."/>
            <person name="Ulrich L.E."/>
            <person name="Elkins J.G."/>
            <person name="Mavromatis K."/>
            <person name="Lykidis A."/>
            <person name="Kim E."/>
            <person name="Thompson L.S."/>
            <person name="Nolan M."/>
            <person name="Land M."/>
            <person name="Copeland A."/>
            <person name="Lapidus A."/>
            <person name="Lucas S."/>
            <person name="Detter C."/>
            <person name="Zhulin I.B."/>
            <person name="Olsen G.J."/>
            <person name="Whitman W."/>
            <person name="Mukhopadhyay B."/>
            <person name="Bristow J."/>
            <person name="Kyrpides N."/>
        </authorList>
    </citation>
    <scope>NUCLEOTIDE SEQUENCE [LARGE SCALE GENOMIC DNA]</scope>
    <source>
        <strain>DSM 2475 / Hrk 5</strain>
    </source>
</reference>
<evidence type="ECO:0000255" key="1">
    <source>
        <dbReference type="HAMAP-Rule" id="MF_00754"/>
    </source>
</evidence>
<accession>A1RXG4</accession>
<feature type="chain" id="PRO_1000046619" description="Ribonuclease P protein component 1">
    <location>
        <begin position="1"/>
        <end position="94"/>
    </location>
</feature>
<keyword id="KW-0963">Cytoplasm</keyword>
<keyword id="KW-0255">Endonuclease</keyword>
<keyword id="KW-0378">Hydrolase</keyword>
<keyword id="KW-0540">Nuclease</keyword>
<keyword id="KW-1185">Reference proteome</keyword>
<keyword id="KW-0819">tRNA processing</keyword>
<protein>
    <recommendedName>
        <fullName evidence="1">Ribonuclease P protein component 1</fullName>
        <shortName evidence="1">RNase P component 1</shortName>
        <ecNumber evidence="1">3.1.26.5</ecNumber>
    </recommendedName>
    <alternativeName>
        <fullName evidence="1">Rpp29</fullName>
    </alternativeName>
</protein>